<proteinExistence type="evidence at protein level"/>
<name>RGA9_SCHPO</name>
<dbReference type="EMBL" id="CU329670">
    <property type="protein sequence ID" value="CAB52580.2"/>
    <property type="molecule type" value="Genomic_DNA"/>
</dbReference>
<dbReference type="PIR" id="T37944">
    <property type="entry name" value="T37944"/>
</dbReference>
<dbReference type="RefSeq" id="NP_594818.2">
    <property type="nucleotide sequence ID" value="NM_001020247.2"/>
</dbReference>
<dbReference type="BioGRID" id="278608">
    <property type="interactions" value="2"/>
</dbReference>
<dbReference type="FunCoup" id="Q9UUJ3">
    <property type="interactions" value="19"/>
</dbReference>
<dbReference type="STRING" id="284812.Q9UUJ3"/>
<dbReference type="iPTMnet" id="Q9UUJ3"/>
<dbReference type="PaxDb" id="4896-SPAC1952.16.1"/>
<dbReference type="EnsemblFungi" id="SPAC1952.16.1">
    <property type="protein sequence ID" value="SPAC1952.16.1:pep"/>
    <property type="gene ID" value="SPAC1952.16"/>
</dbReference>
<dbReference type="PomBase" id="SPAC1952.16">
    <property type="gene designation" value="rga9"/>
</dbReference>
<dbReference type="VEuPathDB" id="FungiDB:SPAC1952.16"/>
<dbReference type="eggNOG" id="ENOG502QQWB">
    <property type="taxonomic scope" value="Eukaryota"/>
</dbReference>
<dbReference type="HOGENOM" id="CLU_416283_0_0_1"/>
<dbReference type="InParanoid" id="Q9UUJ3"/>
<dbReference type="OMA" id="REDYFCE"/>
<dbReference type="Reactome" id="R-SPO-8856828">
    <property type="pathway name" value="Clathrin-mediated endocytosis"/>
</dbReference>
<dbReference type="PRO" id="PR:Q9UUJ3"/>
<dbReference type="Proteomes" id="UP000002485">
    <property type="component" value="Chromosome I"/>
</dbReference>
<dbReference type="GO" id="GO:0005938">
    <property type="term" value="C:cell cortex"/>
    <property type="evidence" value="ECO:0007669"/>
    <property type="project" value="UniProtKB-ARBA"/>
</dbReference>
<dbReference type="GO" id="GO:0032153">
    <property type="term" value="C:cell division site"/>
    <property type="evidence" value="ECO:0000318"/>
    <property type="project" value="GO_Central"/>
</dbReference>
<dbReference type="GO" id="GO:0005737">
    <property type="term" value="C:cytoplasm"/>
    <property type="evidence" value="ECO:0007005"/>
    <property type="project" value="PomBase"/>
</dbReference>
<dbReference type="GO" id="GO:0000935">
    <property type="term" value="C:division septum"/>
    <property type="evidence" value="ECO:0000318"/>
    <property type="project" value="GO_Central"/>
</dbReference>
<dbReference type="GO" id="GO:0005096">
    <property type="term" value="F:GTPase activator activity"/>
    <property type="evidence" value="ECO:0000318"/>
    <property type="project" value="GO_Central"/>
</dbReference>
<dbReference type="GO" id="GO:0007010">
    <property type="term" value="P:cytoskeleton organization"/>
    <property type="evidence" value="ECO:0000318"/>
    <property type="project" value="GO_Central"/>
</dbReference>
<dbReference type="GO" id="GO:0007264">
    <property type="term" value="P:small GTPase-mediated signal transduction"/>
    <property type="evidence" value="ECO:0000318"/>
    <property type="project" value="GO_Central"/>
</dbReference>
<dbReference type="FunFam" id="1.10.555.10:FF:000131">
    <property type="entry name" value="Chromosome 16, whole genome shotgun sequence"/>
    <property type="match status" value="1"/>
</dbReference>
<dbReference type="Gene3D" id="1.20.1270.60">
    <property type="entry name" value="Arfaptin homology (AH) domain/BAR domain"/>
    <property type="match status" value="2"/>
</dbReference>
<dbReference type="Gene3D" id="1.10.555.10">
    <property type="entry name" value="Rho GTPase activation protein"/>
    <property type="match status" value="1"/>
</dbReference>
<dbReference type="InterPro" id="IPR027267">
    <property type="entry name" value="AH/BAR_dom_sf"/>
</dbReference>
<dbReference type="InterPro" id="IPR031160">
    <property type="entry name" value="F_BAR"/>
</dbReference>
<dbReference type="InterPro" id="IPR008936">
    <property type="entry name" value="Rho_GTPase_activation_prot"/>
</dbReference>
<dbReference type="InterPro" id="IPR000198">
    <property type="entry name" value="RhoGAP_dom"/>
</dbReference>
<dbReference type="PANTHER" id="PTHR23065">
    <property type="entry name" value="PROLINE-SERINE-THREONINE PHOSPHATASE INTERACTING PROTEIN 1"/>
    <property type="match status" value="1"/>
</dbReference>
<dbReference type="PANTHER" id="PTHR23065:SF17">
    <property type="entry name" value="RHO-GTPASE-ACTIVATING PROTEIN RGD2"/>
    <property type="match status" value="1"/>
</dbReference>
<dbReference type="Pfam" id="PF00620">
    <property type="entry name" value="RhoGAP"/>
    <property type="match status" value="1"/>
</dbReference>
<dbReference type="SMART" id="SM00324">
    <property type="entry name" value="RhoGAP"/>
    <property type="match status" value="1"/>
</dbReference>
<dbReference type="SUPFAM" id="SSF103657">
    <property type="entry name" value="BAR/IMD domain-like"/>
    <property type="match status" value="2"/>
</dbReference>
<dbReference type="SUPFAM" id="SSF48350">
    <property type="entry name" value="GTPase activation domain, GAP"/>
    <property type="match status" value="1"/>
</dbReference>
<dbReference type="PROSITE" id="PS51741">
    <property type="entry name" value="F_BAR"/>
    <property type="match status" value="1"/>
</dbReference>
<dbReference type="PROSITE" id="PS50238">
    <property type="entry name" value="RHOGAP"/>
    <property type="match status" value="1"/>
</dbReference>
<organism>
    <name type="scientific">Schizosaccharomyces pombe (strain 972 / ATCC 24843)</name>
    <name type="common">Fission yeast</name>
    <dbReference type="NCBI Taxonomy" id="284812"/>
    <lineage>
        <taxon>Eukaryota</taxon>
        <taxon>Fungi</taxon>
        <taxon>Dikarya</taxon>
        <taxon>Ascomycota</taxon>
        <taxon>Taphrinomycotina</taxon>
        <taxon>Schizosaccharomycetes</taxon>
        <taxon>Schizosaccharomycetales</taxon>
        <taxon>Schizosaccharomycetaceae</taxon>
        <taxon>Schizosaccharomyces</taxon>
    </lineage>
</organism>
<sequence>MWDGFSNSFWSRDYITGINRAQRLINEGVEQNEKLLQLLHIRAKSASSCSDLLFKSFSKFNKHHPLNEESNDLPSDAAIHQLYESYLMEASLHKKLGEQLNILVINPFANWSKKYSRRVDEIVSAAIVKINNYNSRFSHVNSKKSNLTDRKPIPTSRKSNKSDSLASALSQLDINPSNVNKFDGLINIVDHPYTAEEFANVLLKLMKASTVKRKSYSHLGDYELVTNCSLLFEAIKTTFGLEKDSYVVKAGNQLIQHGLIRLLGIRRVFENDPEIDAQFTTKSQQLLKSYHLSILEVDPYFQVNDPITATNDDPVLQKYNLAYDNLEQCRHELELYLFMVFKDLEQAELDRLNAVKSVLVECSNYSGNFIPSLNSIFIDNLNSFKNLDSLRDMSTQINKHYTGYFIPVSNNELSTKDEYLFLQKSSLTEDNLIVSLVPKILAYLLDAYSYERDEEVLSCVWTTEVPLKDAFDLKSVLRKTDNVESVLNACVEKYTLSSITCSLRLCLLEFPDSLIRSSFYDYFKAIYTTYTDFEDLDHRLYSIKKCLLHLHSTPLHILEEIIRHLSAYAISIRMKDGQIRHLAKIISPCVLRPPDDLNIIPVEDTHPTLLVIDLINEFENLFADLERPSTPPVEIERALTPITTSPQKLKLPRSSSPCKNPSPTRRFRPF</sequence>
<comment type="subcellular location">
    <subcellularLocation>
        <location evidence="4">Cytoplasm</location>
    </subcellularLocation>
</comment>
<gene>
    <name type="primary">rga9</name>
    <name type="ORF">SPAC1952.16</name>
</gene>
<evidence type="ECO:0000255" key="1">
    <source>
        <dbReference type="PROSITE-ProRule" id="PRU00172"/>
    </source>
</evidence>
<evidence type="ECO:0000255" key="2">
    <source>
        <dbReference type="PROSITE-ProRule" id="PRU01077"/>
    </source>
</evidence>
<evidence type="ECO:0000256" key="3">
    <source>
        <dbReference type="SAM" id="MobiDB-lite"/>
    </source>
</evidence>
<evidence type="ECO:0000269" key="4">
    <source>
    </source>
</evidence>
<evidence type="ECO:0000269" key="5">
    <source>
    </source>
</evidence>
<feature type="chain" id="PRO_0000097317" description="Probable Rho-GTPase-activating protein 9">
    <location>
        <begin position="1"/>
        <end position="670"/>
    </location>
</feature>
<feature type="domain" description="F-BAR" evidence="2">
    <location>
        <begin position="3"/>
        <end position="392"/>
    </location>
</feature>
<feature type="domain" description="Rho-GAP" evidence="1">
    <location>
        <begin position="425"/>
        <end position="622"/>
    </location>
</feature>
<feature type="region of interest" description="Disordered" evidence="3">
    <location>
        <begin position="141"/>
        <end position="161"/>
    </location>
</feature>
<feature type="region of interest" description="Disordered" evidence="3">
    <location>
        <begin position="641"/>
        <end position="670"/>
    </location>
</feature>
<feature type="compositionally biased region" description="Polar residues" evidence="3">
    <location>
        <begin position="641"/>
        <end position="663"/>
    </location>
</feature>
<feature type="site" description="Arginine finger; crucial for GTP hydrolysis by stabilizing the transition state" evidence="1">
    <location>
        <position position="462"/>
    </location>
</feature>
<feature type="modified residue" description="Phosphothreonine" evidence="5">
    <location>
        <position position="640"/>
    </location>
</feature>
<feature type="modified residue" description="Phosphoserine" evidence="5">
    <location>
        <position position="645"/>
    </location>
</feature>
<reference key="1">
    <citation type="journal article" date="2002" name="Nature">
        <title>The genome sequence of Schizosaccharomyces pombe.</title>
        <authorList>
            <person name="Wood V."/>
            <person name="Gwilliam R."/>
            <person name="Rajandream M.A."/>
            <person name="Lyne M.H."/>
            <person name="Lyne R."/>
            <person name="Stewart A."/>
            <person name="Sgouros J.G."/>
            <person name="Peat N."/>
            <person name="Hayles J."/>
            <person name="Baker S.G."/>
            <person name="Basham D."/>
            <person name="Bowman S."/>
            <person name="Brooks K."/>
            <person name="Brown D."/>
            <person name="Brown S."/>
            <person name="Chillingworth T."/>
            <person name="Churcher C.M."/>
            <person name="Collins M."/>
            <person name="Connor R."/>
            <person name="Cronin A."/>
            <person name="Davis P."/>
            <person name="Feltwell T."/>
            <person name="Fraser A."/>
            <person name="Gentles S."/>
            <person name="Goble A."/>
            <person name="Hamlin N."/>
            <person name="Harris D.E."/>
            <person name="Hidalgo J."/>
            <person name="Hodgson G."/>
            <person name="Holroyd S."/>
            <person name="Hornsby T."/>
            <person name="Howarth S."/>
            <person name="Huckle E.J."/>
            <person name="Hunt S."/>
            <person name="Jagels K."/>
            <person name="James K.D."/>
            <person name="Jones L."/>
            <person name="Jones M."/>
            <person name="Leather S."/>
            <person name="McDonald S."/>
            <person name="McLean J."/>
            <person name="Mooney P."/>
            <person name="Moule S."/>
            <person name="Mungall K.L."/>
            <person name="Murphy L.D."/>
            <person name="Niblett D."/>
            <person name="Odell C."/>
            <person name="Oliver K."/>
            <person name="O'Neil S."/>
            <person name="Pearson D."/>
            <person name="Quail M.A."/>
            <person name="Rabbinowitsch E."/>
            <person name="Rutherford K.M."/>
            <person name="Rutter S."/>
            <person name="Saunders D."/>
            <person name="Seeger K."/>
            <person name="Sharp S."/>
            <person name="Skelton J."/>
            <person name="Simmonds M.N."/>
            <person name="Squares R."/>
            <person name="Squares S."/>
            <person name="Stevens K."/>
            <person name="Taylor K."/>
            <person name="Taylor R.G."/>
            <person name="Tivey A."/>
            <person name="Walsh S.V."/>
            <person name="Warren T."/>
            <person name="Whitehead S."/>
            <person name="Woodward J.R."/>
            <person name="Volckaert G."/>
            <person name="Aert R."/>
            <person name="Robben J."/>
            <person name="Grymonprez B."/>
            <person name="Weltjens I."/>
            <person name="Vanstreels E."/>
            <person name="Rieger M."/>
            <person name="Schaefer M."/>
            <person name="Mueller-Auer S."/>
            <person name="Gabel C."/>
            <person name="Fuchs M."/>
            <person name="Duesterhoeft A."/>
            <person name="Fritzc C."/>
            <person name="Holzer E."/>
            <person name="Moestl D."/>
            <person name="Hilbert H."/>
            <person name="Borzym K."/>
            <person name="Langer I."/>
            <person name="Beck A."/>
            <person name="Lehrach H."/>
            <person name="Reinhardt R."/>
            <person name="Pohl T.M."/>
            <person name="Eger P."/>
            <person name="Zimmermann W."/>
            <person name="Wedler H."/>
            <person name="Wambutt R."/>
            <person name="Purnelle B."/>
            <person name="Goffeau A."/>
            <person name="Cadieu E."/>
            <person name="Dreano S."/>
            <person name="Gloux S."/>
            <person name="Lelaure V."/>
            <person name="Mottier S."/>
            <person name="Galibert F."/>
            <person name="Aves S.J."/>
            <person name="Xiang Z."/>
            <person name="Hunt C."/>
            <person name="Moore K."/>
            <person name="Hurst S.M."/>
            <person name="Lucas M."/>
            <person name="Rochet M."/>
            <person name="Gaillardin C."/>
            <person name="Tallada V.A."/>
            <person name="Garzon A."/>
            <person name="Thode G."/>
            <person name="Daga R.R."/>
            <person name="Cruzado L."/>
            <person name="Jimenez J."/>
            <person name="Sanchez M."/>
            <person name="del Rey F."/>
            <person name="Benito J."/>
            <person name="Dominguez A."/>
            <person name="Revuelta J.L."/>
            <person name="Moreno S."/>
            <person name="Armstrong J."/>
            <person name="Forsburg S.L."/>
            <person name="Cerutti L."/>
            <person name="Lowe T."/>
            <person name="McCombie W.R."/>
            <person name="Paulsen I."/>
            <person name="Potashkin J."/>
            <person name="Shpakovski G.V."/>
            <person name="Ussery D."/>
            <person name="Barrell B.G."/>
            <person name="Nurse P."/>
        </authorList>
    </citation>
    <scope>NUCLEOTIDE SEQUENCE [LARGE SCALE GENOMIC DNA]</scope>
    <source>
        <strain>972 / ATCC 24843</strain>
    </source>
</reference>
<reference key="2">
    <citation type="journal article" date="2011" name="Science">
        <title>Comparative functional genomics of the fission yeasts.</title>
        <authorList>
            <person name="Rhind N."/>
            <person name="Chen Z."/>
            <person name="Yassour M."/>
            <person name="Thompson D.A."/>
            <person name="Haas B.J."/>
            <person name="Habib N."/>
            <person name="Wapinski I."/>
            <person name="Roy S."/>
            <person name="Lin M.F."/>
            <person name="Heiman D.I."/>
            <person name="Young S.K."/>
            <person name="Furuya K."/>
            <person name="Guo Y."/>
            <person name="Pidoux A."/>
            <person name="Chen H.M."/>
            <person name="Robbertse B."/>
            <person name="Goldberg J.M."/>
            <person name="Aoki K."/>
            <person name="Bayne E.H."/>
            <person name="Berlin A.M."/>
            <person name="Desjardins C.A."/>
            <person name="Dobbs E."/>
            <person name="Dukaj L."/>
            <person name="Fan L."/>
            <person name="FitzGerald M.G."/>
            <person name="French C."/>
            <person name="Gujja S."/>
            <person name="Hansen K."/>
            <person name="Keifenheim D."/>
            <person name="Levin J.Z."/>
            <person name="Mosher R.A."/>
            <person name="Mueller C.A."/>
            <person name="Pfiffner J."/>
            <person name="Priest M."/>
            <person name="Russ C."/>
            <person name="Smialowska A."/>
            <person name="Swoboda P."/>
            <person name="Sykes S.M."/>
            <person name="Vaughn M."/>
            <person name="Vengrova S."/>
            <person name="Yoder R."/>
            <person name="Zeng Q."/>
            <person name="Allshire R."/>
            <person name="Baulcombe D."/>
            <person name="Birren B.W."/>
            <person name="Brown W."/>
            <person name="Ekwall K."/>
            <person name="Kellis M."/>
            <person name="Leatherwood J."/>
            <person name="Levin H."/>
            <person name="Margalit H."/>
            <person name="Martienssen R."/>
            <person name="Nieduszynski C.A."/>
            <person name="Spatafora J.W."/>
            <person name="Friedman N."/>
            <person name="Dalgaard J.Z."/>
            <person name="Baumann P."/>
            <person name="Niki H."/>
            <person name="Regev A."/>
            <person name="Nusbaum C."/>
        </authorList>
    </citation>
    <scope>REVISION OF GENE MODEL</scope>
</reference>
<reference key="3">
    <citation type="journal article" date="2006" name="Nat. Biotechnol.">
        <title>ORFeome cloning and global analysis of protein localization in the fission yeast Schizosaccharomyces pombe.</title>
        <authorList>
            <person name="Matsuyama A."/>
            <person name="Arai R."/>
            <person name="Yashiroda Y."/>
            <person name="Shirai A."/>
            <person name="Kamata A."/>
            <person name="Sekido S."/>
            <person name="Kobayashi Y."/>
            <person name="Hashimoto A."/>
            <person name="Hamamoto M."/>
            <person name="Hiraoka Y."/>
            <person name="Horinouchi S."/>
            <person name="Yoshida M."/>
        </authorList>
    </citation>
    <scope>SUBCELLULAR LOCATION [LARGE SCALE ANALYSIS]</scope>
</reference>
<reference key="4">
    <citation type="journal article" date="2008" name="J. Proteome Res.">
        <title>Phosphoproteome analysis of fission yeast.</title>
        <authorList>
            <person name="Wilson-Grady J.T."/>
            <person name="Villen J."/>
            <person name="Gygi S.P."/>
        </authorList>
    </citation>
    <scope>PHOSPHORYLATION [LARGE SCALE ANALYSIS] AT THR-640 AND SER-645</scope>
    <scope>IDENTIFICATION BY MASS SPECTROMETRY</scope>
</reference>
<accession>Q9UUJ3</accession>
<keyword id="KW-0175">Coiled coil</keyword>
<keyword id="KW-0963">Cytoplasm</keyword>
<keyword id="KW-0343">GTPase activation</keyword>
<keyword id="KW-0597">Phosphoprotein</keyword>
<keyword id="KW-1185">Reference proteome</keyword>
<protein>
    <recommendedName>
        <fullName>Probable Rho-GTPase-activating protein 9</fullName>
    </recommendedName>
</protein>